<name>CRBB2_CHICK</name>
<dbReference type="EMBL" id="S52930">
    <property type="protein sequence ID" value="AAB25042.1"/>
    <property type="molecule type" value="mRNA"/>
</dbReference>
<dbReference type="PIR" id="B49181">
    <property type="entry name" value="B49181"/>
</dbReference>
<dbReference type="SMR" id="Q05714"/>
<dbReference type="FunCoup" id="Q05714">
    <property type="interactions" value="122"/>
</dbReference>
<dbReference type="STRING" id="9031.ENSGALP00000037856"/>
<dbReference type="PaxDb" id="9031-ENSGALP00000037856"/>
<dbReference type="VEuPathDB" id="HostDB:geneid_396088"/>
<dbReference type="eggNOG" id="ENOG502QVM6">
    <property type="taxonomic scope" value="Eukaryota"/>
</dbReference>
<dbReference type="InParanoid" id="Q05714"/>
<dbReference type="OrthoDB" id="8525367at2759"/>
<dbReference type="PhylomeDB" id="Q05714"/>
<dbReference type="Proteomes" id="UP000000539">
    <property type="component" value="Unassembled WGS sequence"/>
</dbReference>
<dbReference type="GO" id="GO:0005212">
    <property type="term" value="F:structural constituent of eye lens"/>
    <property type="evidence" value="ECO:0000318"/>
    <property type="project" value="GO_Central"/>
</dbReference>
<dbReference type="GO" id="GO:0002088">
    <property type="term" value="P:lens development in camera-type eye"/>
    <property type="evidence" value="ECO:0000318"/>
    <property type="project" value="GO_Central"/>
</dbReference>
<dbReference type="GO" id="GO:0007601">
    <property type="term" value="P:visual perception"/>
    <property type="evidence" value="ECO:0000318"/>
    <property type="project" value="GO_Central"/>
</dbReference>
<dbReference type="FunFam" id="2.60.20.10:FF:000005">
    <property type="entry name" value="Crystallin, beta B1"/>
    <property type="match status" value="1"/>
</dbReference>
<dbReference type="FunFam" id="2.60.20.10:FF:000002">
    <property type="entry name" value="Crystallin, beta B2"/>
    <property type="match status" value="1"/>
</dbReference>
<dbReference type="Gene3D" id="2.60.20.10">
    <property type="entry name" value="Crystallins"/>
    <property type="match status" value="2"/>
</dbReference>
<dbReference type="InterPro" id="IPR050252">
    <property type="entry name" value="Beta/Gamma-Crystallin"/>
</dbReference>
<dbReference type="InterPro" id="IPR001064">
    <property type="entry name" value="Beta/gamma_crystallin"/>
</dbReference>
<dbReference type="InterPro" id="IPR011024">
    <property type="entry name" value="G_crystallin-like"/>
</dbReference>
<dbReference type="PANTHER" id="PTHR11818:SF11">
    <property type="entry name" value="BETA-CRYSTALLIN B2"/>
    <property type="match status" value="1"/>
</dbReference>
<dbReference type="PANTHER" id="PTHR11818">
    <property type="entry name" value="BETA/GAMMA CRYSTALLIN"/>
    <property type="match status" value="1"/>
</dbReference>
<dbReference type="Pfam" id="PF00030">
    <property type="entry name" value="Crystall"/>
    <property type="match status" value="2"/>
</dbReference>
<dbReference type="PRINTS" id="PR01367">
    <property type="entry name" value="BGCRYSTALLIN"/>
</dbReference>
<dbReference type="SMART" id="SM00247">
    <property type="entry name" value="XTALbg"/>
    <property type="match status" value="2"/>
</dbReference>
<dbReference type="SUPFAM" id="SSF49695">
    <property type="entry name" value="gamma-Crystallin-like"/>
    <property type="match status" value="1"/>
</dbReference>
<dbReference type="PROSITE" id="PS50915">
    <property type="entry name" value="CRYSTALLIN_BETA_GAMMA"/>
    <property type="match status" value="4"/>
</dbReference>
<accession>Q05714</accession>
<feature type="initiator methionine" description="Removed" evidence="2">
    <location>
        <position position="1"/>
    </location>
</feature>
<feature type="chain" id="PRO_0000057557" description="Beta-crystallin B2">
    <location>
        <begin position="2"/>
        <end position="219"/>
    </location>
</feature>
<feature type="domain" description="Beta/gamma crystallin 'Greek key' 1" evidence="3">
    <location>
        <begin position="17"/>
        <end position="56"/>
    </location>
</feature>
<feature type="domain" description="Beta/gamma crystallin 'Greek key' 2" evidence="3">
    <location>
        <begin position="57"/>
        <end position="101"/>
    </location>
</feature>
<feature type="domain" description="Beta/gamma crystallin 'Greek key' 3" evidence="3">
    <location>
        <begin position="121"/>
        <end position="162"/>
    </location>
</feature>
<feature type="domain" description="Beta/gamma crystallin 'Greek key' 4" evidence="3">
    <location>
        <begin position="163"/>
        <end position="205"/>
    </location>
</feature>
<feature type="region of interest" description="N-terminal arm">
    <location>
        <begin position="2"/>
        <end position="16"/>
    </location>
</feature>
<feature type="region of interest" description="Connecting peptide">
    <location>
        <begin position="102"/>
        <end position="120"/>
    </location>
</feature>
<feature type="region of interest" description="C-terminal arm">
    <location>
        <begin position="207"/>
        <end position="219"/>
    </location>
</feature>
<feature type="modified residue" description="N-acetylalanine" evidence="2">
    <location>
        <position position="2"/>
    </location>
</feature>
<proteinExistence type="evidence at transcript level"/>
<evidence type="ECO:0000250" key="1"/>
<evidence type="ECO:0000250" key="2">
    <source>
        <dbReference type="UniProtKB" id="P02522"/>
    </source>
</evidence>
<evidence type="ECO:0000255" key="3">
    <source>
        <dbReference type="PROSITE-ProRule" id="PRU00028"/>
    </source>
</evidence>
<evidence type="ECO:0000305" key="4"/>
<gene>
    <name type="primary">CRYBB2</name>
</gene>
<protein>
    <recommendedName>
        <fullName>Beta-crystallin B2</fullName>
    </recommendedName>
    <alternativeName>
        <fullName>Beta-B2 crystallin</fullName>
    </alternativeName>
    <alternativeName>
        <fullName>Beta-crystallin Bp</fullName>
    </alternativeName>
</protein>
<reference key="1">
    <citation type="journal article" date="1992" name="Exp. Eye Res.">
        <title>Crystallin gene expression in the process of lentoidogenesis in cultures of chicken lens epithelial cells.</title>
        <authorList>
            <person name="Sawada K."/>
            <person name="Agata K."/>
            <person name="Eguchi G."/>
        </authorList>
    </citation>
    <scope>NUCLEOTIDE SEQUENCE [MRNA]</scope>
    <source>
        <tissue>Lens</tissue>
    </source>
</reference>
<sequence length="219" mass="25060">MASEHQMPASKQQPASPNIAIFEQENFQGRCHELSGACPNLKDAGVDKVGSILVHSGPWVGYEQASCKGEQFVFEKGEYPRWDSWTNSRRSDSITSLRPIKVVRAPRQPLPTRQTKDSQEHKIVLYENPSFTGKKIEIIDDDVPSFHAHGYQEKVSSVRVQSGTWVGYQYPGYRGYQYLFEKGDYKDSSEFGAQHPQIQSVRRIRDMQWHQRGAYHPSN</sequence>
<organism>
    <name type="scientific">Gallus gallus</name>
    <name type="common">Chicken</name>
    <dbReference type="NCBI Taxonomy" id="9031"/>
    <lineage>
        <taxon>Eukaryota</taxon>
        <taxon>Metazoa</taxon>
        <taxon>Chordata</taxon>
        <taxon>Craniata</taxon>
        <taxon>Vertebrata</taxon>
        <taxon>Euteleostomi</taxon>
        <taxon>Archelosauria</taxon>
        <taxon>Archosauria</taxon>
        <taxon>Dinosauria</taxon>
        <taxon>Saurischia</taxon>
        <taxon>Theropoda</taxon>
        <taxon>Coelurosauria</taxon>
        <taxon>Aves</taxon>
        <taxon>Neognathae</taxon>
        <taxon>Galloanserae</taxon>
        <taxon>Galliformes</taxon>
        <taxon>Phasianidae</taxon>
        <taxon>Phasianinae</taxon>
        <taxon>Gallus</taxon>
    </lineage>
</organism>
<keyword id="KW-0007">Acetylation</keyword>
<keyword id="KW-0273">Eye lens protein</keyword>
<keyword id="KW-1185">Reference proteome</keyword>
<keyword id="KW-0677">Repeat</keyword>
<comment type="function">
    <text>Crystallins are the dominant structural components of the vertebrate eye lens.</text>
</comment>
<comment type="subunit">
    <text evidence="1">Homo/heterodimer, or complexes of higher-order. The structure of beta-crystallin oligomers seems to be stabilized through interactions between the N-terminal arms (By similarity).</text>
</comment>
<comment type="domain">
    <text>Has a two-domain beta-structure, folded into four very similar Greek key motifs.</text>
</comment>
<comment type="similarity">
    <text evidence="4">Belongs to the beta/gamma-crystallin family.</text>
</comment>